<proteinExistence type="inferred from homology"/>
<reference key="1">
    <citation type="journal article" date="2006" name="Lancet">
        <title>Complete genome sequence of USA300, an epidemic clone of community-acquired meticillin-resistant Staphylococcus aureus.</title>
        <authorList>
            <person name="Diep B.A."/>
            <person name="Gill S.R."/>
            <person name="Chang R.F."/>
            <person name="Phan T.H."/>
            <person name="Chen J.H."/>
            <person name="Davidson M.G."/>
            <person name="Lin F."/>
            <person name="Lin J."/>
            <person name="Carleton H.A."/>
            <person name="Mongodin E.F."/>
            <person name="Sensabaugh G.F."/>
            <person name="Perdreau-Remington F."/>
        </authorList>
    </citation>
    <scope>NUCLEOTIDE SEQUENCE [LARGE SCALE GENOMIC DNA]</scope>
    <source>
        <strain>USA300</strain>
    </source>
</reference>
<evidence type="ECO:0000255" key="1">
    <source>
        <dbReference type="HAMAP-Rule" id="MF_01575"/>
    </source>
</evidence>
<sequence length="187" mass="22191">MVKTVYVTGYKSFELNIFKDDAPEVHYLKQFIKHKIEQLLDEGLEWVLIQGQMGIELWTAEVVIELQRTYDSLKFAVITPFQGHTEKWNEHNQSKYANIIKHADYVDSIFHTSYQGPFQFKQADQFMLEHSDQTLLIYDEEQEASPKFFKQMLVDFMDKTNYTCDIVTFDELTAFINDLQWSEDQSF</sequence>
<organism>
    <name type="scientific">Staphylococcus aureus (strain USA300)</name>
    <dbReference type="NCBI Taxonomy" id="367830"/>
    <lineage>
        <taxon>Bacteria</taxon>
        <taxon>Bacillati</taxon>
        <taxon>Bacillota</taxon>
        <taxon>Bacilli</taxon>
        <taxon>Bacillales</taxon>
        <taxon>Staphylococcaceae</taxon>
        <taxon>Staphylococcus</taxon>
    </lineage>
</organism>
<dbReference type="EMBL" id="CP000255">
    <property type="protein sequence ID" value="ABD20604.1"/>
    <property type="molecule type" value="Genomic_DNA"/>
</dbReference>
<dbReference type="RefSeq" id="WP_000241308.1">
    <property type="nucleotide sequence ID" value="NZ_CP027476.1"/>
</dbReference>
<dbReference type="SMR" id="Q2FGZ3"/>
<dbReference type="KEGG" id="saa:SAUSA300_1338"/>
<dbReference type="HOGENOM" id="CLU_105319_0_0_9"/>
<dbReference type="OMA" id="LEWVITG"/>
<dbReference type="Proteomes" id="UP000001939">
    <property type="component" value="Chromosome"/>
</dbReference>
<dbReference type="Gene3D" id="3.40.50.450">
    <property type="match status" value="1"/>
</dbReference>
<dbReference type="HAMAP" id="MF_01575">
    <property type="entry name" value="UPF0398"/>
    <property type="match status" value="1"/>
</dbReference>
<dbReference type="InterPro" id="IPR010697">
    <property type="entry name" value="YspA"/>
</dbReference>
<dbReference type="NCBIfam" id="NF010181">
    <property type="entry name" value="PRK13660.1"/>
    <property type="match status" value="1"/>
</dbReference>
<dbReference type="PANTHER" id="PTHR38440:SF1">
    <property type="entry name" value="UPF0398 PROTEIN SPR0331"/>
    <property type="match status" value="1"/>
</dbReference>
<dbReference type="PANTHER" id="PTHR38440">
    <property type="entry name" value="UPF0398 PROTEIN YPSA"/>
    <property type="match status" value="1"/>
</dbReference>
<dbReference type="Pfam" id="PF06908">
    <property type="entry name" value="YpsA"/>
    <property type="match status" value="1"/>
</dbReference>
<dbReference type="PIRSF" id="PIRSF021290">
    <property type="entry name" value="DUF1273"/>
    <property type="match status" value="1"/>
</dbReference>
<dbReference type="SUPFAM" id="SSF102405">
    <property type="entry name" value="MCP/YpsA-like"/>
    <property type="match status" value="1"/>
</dbReference>
<protein>
    <recommendedName>
        <fullName evidence="1">UPF0398 protein SAUSA300_1338</fullName>
    </recommendedName>
</protein>
<comment type="similarity">
    <text evidence="1">Belongs to the UPF0398 family.</text>
</comment>
<gene>
    <name type="ordered locus">SAUSA300_1338</name>
</gene>
<name>Y1338_STAA3</name>
<accession>Q2FGZ3</accession>
<feature type="chain" id="PRO_0000267176" description="UPF0398 protein SAUSA300_1338">
    <location>
        <begin position="1"/>
        <end position="187"/>
    </location>
</feature>